<sequence>MDTEQAIEIQEKDPVSSPPAEIASSPERFINRELSWLHFNRRVLEESVNPRHPALERVRFLSISANNLDEFFMVRVAGIRAQVREGIAERSPDGLTPLEQLKVINESVSQLAIDQQAIWRDLRKFLAELGIVLVDGQDVTKSERAWIEDHFLASIFPLLTPLAIDPAHPFPFIPSLGFTVALQLMRTSDGRPMNALIRMPGKIDRFIRFPGSKDGVIRLITLEQATSLFIGRLFPGYTVKGQGAFRIIRDSEIEIEEEAEDLVRLFETALKRRRRGSVIRLEIEANMPEELRAFVQDALSTTDDEVFVVDGVLAMNELSQLTRVDRPDLEFAPYVPRHPERVRDHGGDIFAAIRQKDLIVHHPYESFDVVVQFLQQAARDPDVVAIKQTLYRTSNNSPIVRALAEAAEAGKSVTALVELKARFDEEANIRWARDLERAGVQVVYGFLQLKTHAKLSMVVRREGGGLTTYVHTGTGNYHPVTARIYTDLSYFTSDPVIGRDVTRVFNYITGYAEPIDIEKMAVSPLTLRKRMIEHIHGETSFARQGKPAVIWMKMNSLVDPDIIDALYEASQAGVSIDLIVRGICCLRPGLPGLSENIRVKSVIGRFLEHGRIYCFGMGQGLPSAKAAVYISSADMMPRNLDRRVEVLCPLQNPTVHQQVLEQIMVANLKDTEQSWQLLPDGSSTRMKAAKGEEPFNLHNYFMTNPSLSGRGKSLKESSPRRLTRRNERNPS</sequence>
<keyword id="KW-0067">ATP-binding</keyword>
<keyword id="KW-0418">Kinase</keyword>
<keyword id="KW-0460">Magnesium</keyword>
<keyword id="KW-0479">Metal-binding</keyword>
<keyword id="KW-0547">Nucleotide-binding</keyword>
<keyword id="KW-0597">Phosphoprotein</keyword>
<keyword id="KW-1185">Reference proteome</keyword>
<keyword id="KW-0808">Transferase</keyword>
<evidence type="ECO:0000255" key="1">
    <source>
        <dbReference type="HAMAP-Rule" id="MF_00347"/>
    </source>
</evidence>
<evidence type="ECO:0000256" key="2">
    <source>
        <dbReference type="SAM" id="MobiDB-lite"/>
    </source>
</evidence>
<organism>
    <name type="scientific">Bradyrhizobium sp. (strain BTAi1 / ATCC BAA-1182)</name>
    <dbReference type="NCBI Taxonomy" id="288000"/>
    <lineage>
        <taxon>Bacteria</taxon>
        <taxon>Pseudomonadati</taxon>
        <taxon>Pseudomonadota</taxon>
        <taxon>Alphaproteobacteria</taxon>
        <taxon>Hyphomicrobiales</taxon>
        <taxon>Nitrobacteraceae</taxon>
        <taxon>Bradyrhizobium</taxon>
    </lineage>
</organism>
<feature type="chain" id="PRO_1000120496" description="Polyphosphate kinase">
    <location>
        <begin position="1"/>
        <end position="731"/>
    </location>
</feature>
<feature type="region of interest" description="Disordered" evidence="2">
    <location>
        <begin position="1"/>
        <end position="22"/>
    </location>
</feature>
<feature type="region of interest" description="Disordered" evidence="2">
    <location>
        <begin position="701"/>
        <end position="731"/>
    </location>
</feature>
<feature type="compositionally biased region" description="Basic and acidic residues" evidence="2">
    <location>
        <begin position="713"/>
        <end position="731"/>
    </location>
</feature>
<feature type="active site" description="Phosphohistidine intermediate" evidence="1">
    <location>
        <position position="452"/>
    </location>
</feature>
<feature type="binding site" evidence="1">
    <location>
        <position position="67"/>
    </location>
    <ligand>
        <name>ATP</name>
        <dbReference type="ChEBI" id="CHEBI:30616"/>
    </ligand>
</feature>
<feature type="binding site" evidence="1">
    <location>
        <position position="392"/>
    </location>
    <ligand>
        <name>Mg(2+)</name>
        <dbReference type="ChEBI" id="CHEBI:18420"/>
    </ligand>
</feature>
<feature type="binding site" evidence="1">
    <location>
        <position position="422"/>
    </location>
    <ligand>
        <name>Mg(2+)</name>
        <dbReference type="ChEBI" id="CHEBI:18420"/>
    </ligand>
</feature>
<feature type="binding site" evidence="1">
    <location>
        <position position="485"/>
    </location>
    <ligand>
        <name>ATP</name>
        <dbReference type="ChEBI" id="CHEBI:30616"/>
    </ligand>
</feature>
<feature type="binding site" evidence="1">
    <location>
        <position position="581"/>
    </location>
    <ligand>
        <name>ATP</name>
        <dbReference type="ChEBI" id="CHEBI:30616"/>
    </ligand>
</feature>
<feature type="binding site" evidence="1">
    <location>
        <position position="609"/>
    </location>
    <ligand>
        <name>ATP</name>
        <dbReference type="ChEBI" id="CHEBI:30616"/>
    </ligand>
</feature>
<reference key="1">
    <citation type="journal article" date="2007" name="Science">
        <title>Legumes symbioses: absence of nod genes in photosynthetic bradyrhizobia.</title>
        <authorList>
            <person name="Giraud E."/>
            <person name="Moulin L."/>
            <person name="Vallenet D."/>
            <person name="Barbe V."/>
            <person name="Cytryn E."/>
            <person name="Avarre J.-C."/>
            <person name="Jaubert M."/>
            <person name="Simon D."/>
            <person name="Cartieaux F."/>
            <person name="Prin Y."/>
            <person name="Bena G."/>
            <person name="Hannibal L."/>
            <person name="Fardoux J."/>
            <person name="Kojadinovic M."/>
            <person name="Vuillet L."/>
            <person name="Lajus A."/>
            <person name="Cruveiller S."/>
            <person name="Rouy Z."/>
            <person name="Mangenot S."/>
            <person name="Segurens B."/>
            <person name="Dossat C."/>
            <person name="Franck W.L."/>
            <person name="Chang W.-S."/>
            <person name="Saunders E."/>
            <person name="Bruce D."/>
            <person name="Richardson P."/>
            <person name="Normand P."/>
            <person name="Dreyfus B."/>
            <person name="Pignol D."/>
            <person name="Stacey G."/>
            <person name="Emerich D."/>
            <person name="Vermeglio A."/>
            <person name="Medigue C."/>
            <person name="Sadowsky M."/>
        </authorList>
    </citation>
    <scope>NUCLEOTIDE SEQUENCE [LARGE SCALE GENOMIC DNA]</scope>
    <source>
        <strain>BTAi1 / ATCC BAA-1182</strain>
    </source>
</reference>
<gene>
    <name evidence="1" type="primary">ppk</name>
    <name type="ordered locus">BBta_3849</name>
</gene>
<protein>
    <recommendedName>
        <fullName evidence="1">Polyphosphate kinase</fullName>
        <ecNumber evidence="1">2.7.4.1</ecNumber>
    </recommendedName>
    <alternativeName>
        <fullName evidence="1">ATP-polyphosphate phosphotransferase</fullName>
    </alternativeName>
    <alternativeName>
        <fullName evidence="1">Polyphosphoric acid kinase</fullName>
    </alternativeName>
</protein>
<dbReference type="EC" id="2.7.4.1" evidence="1"/>
<dbReference type="EMBL" id="CP000494">
    <property type="protein sequence ID" value="ABQ35925.1"/>
    <property type="molecule type" value="Genomic_DNA"/>
</dbReference>
<dbReference type="RefSeq" id="WP_012043930.1">
    <property type="nucleotide sequence ID" value="NC_009485.1"/>
</dbReference>
<dbReference type="SMR" id="A5EID1"/>
<dbReference type="STRING" id="288000.BBta_3849"/>
<dbReference type="KEGG" id="bbt:BBta_3849"/>
<dbReference type="eggNOG" id="COG0855">
    <property type="taxonomic scope" value="Bacteria"/>
</dbReference>
<dbReference type="HOGENOM" id="CLU_009678_5_0_5"/>
<dbReference type="Proteomes" id="UP000000246">
    <property type="component" value="Chromosome"/>
</dbReference>
<dbReference type="GO" id="GO:0009358">
    <property type="term" value="C:polyphosphate kinase complex"/>
    <property type="evidence" value="ECO:0007669"/>
    <property type="project" value="InterPro"/>
</dbReference>
<dbReference type="GO" id="GO:0005524">
    <property type="term" value="F:ATP binding"/>
    <property type="evidence" value="ECO:0007669"/>
    <property type="project" value="UniProtKB-KW"/>
</dbReference>
<dbReference type="GO" id="GO:0046872">
    <property type="term" value="F:metal ion binding"/>
    <property type="evidence" value="ECO:0007669"/>
    <property type="project" value="UniProtKB-KW"/>
</dbReference>
<dbReference type="GO" id="GO:0008976">
    <property type="term" value="F:polyphosphate kinase activity"/>
    <property type="evidence" value="ECO:0007669"/>
    <property type="project" value="UniProtKB-UniRule"/>
</dbReference>
<dbReference type="GO" id="GO:0006799">
    <property type="term" value="P:polyphosphate biosynthetic process"/>
    <property type="evidence" value="ECO:0007669"/>
    <property type="project" value="UniProtKB-UniRule"/>
</dbReference>
<dbReference type="CDD" id="cd09165">
    <property type="entry name" value="PLDc_PaPPK1_C1_like"/>
    <property type="match status" value="1"/>
</dbReference>
<dbReference type="CDD" id="cd09168">
    <property type="entry name" value="PLDc_PaPPK1_C2_like"/>
    <property type="match status" value="1"/>
</dbReference>
<dbReference type="FunFam" id="3.30.870.10:FF:000001">
    <property type="entry name" value="Polyphosphate kinase"/>
    <property type="match status" value="1"/>
</dbReference>
<dbReference type="Gene3D" id="3.30.870.10">
    <property type="entry name" value="Endonuclease Chain A"/>
    <property type="match status" value="2"/>
</dbReference>
<dbReference type="Gene3D" id="3.30.1840.10">
    <property type="entry name" value="Polyphosphate kinase middle domain"/>
    <property type="match status" value="1"/>
</dbReference>
<dbReference type="Gene3D" id="1.20.58.310">
    <property type="entry name" value="Polyphosphate kinase N-terminal domain"/>
    <property type="match status" value="1"/>
</dbReference>
<dbReference type="HAMAP" id="MF_00347">
    <property type="entry name" value="Polyphosphate_kinase"/>
    <property type="match status" value="1"/>
</dbReference>
<dbReference type="InterPro" id="IPR003414">
    <property type="entry name" value="PP_kinase"/>
</dbReference>
<dbReference type="InterPro" id="IPR041108">
    <property type="entry name" value="PP_kinase_C_1"/>
</dbReference>
<dbReference type="InterPro" id="IPR024953">
    <property type="entry name" value="PP_kinase_middle"/>
</dbReference>
<dbReference type="InterPro" id="IPR036830">
    <property type="entry name" value="PP_kinase_middle_dom_sf"/>
</dbReference>
<dbReference type="InterPro" id="IPR025200">
    <property type="entry name" value="PPK_C_dom2"/>
</dbReference>
<dbReference type="InterPro" id="IPR025198">
    <property type="entry name" value="PPK_N_dom"/>
</dbReference>
<dbReference type="InterPro" id="IPR036832">
    <property type="entry name" value="PPK_N_dom_sf"/>
</dbReference>
<dbReference type="NCBIfam" id="TIGR03705">
    <property type="entry name" value="poly_P_kin"/>
    <property type="match status" value="1"/>
</dbReference>
<dbReference type="NCBIfam" id="NF003917">
    <property type="entry name" value="PRK05443.1-1"/>
    <property type="match status" value="1"/>
</dbReference>
<dbReference type="NCBIfam" id="NF003918">
    <property type="entry name" value="PRK05443.1-2"/>
    <property type="match status" value="1"/>
</dbReference>
<dbReference type="NCBIfam" id="NF003919">
    <property type="entry name" value="PRK05443.1-4"/>
    <property type="match status" value="1"/>
</dbReference>
<dbReference type="NCBIfam" id="NF003921">
    <property type="entry name" value="PRK05443.2-2"/>
    <property type="match status" value="1"/>
</dbReference>
<dbReference type="PANTHER" id="PTHR30218">
    <property type="entry name" value="POLYPHOSPHATE KINASE"/>
    <property type="match status" value="1"/>
</dbReference>
<dbReference type="PANTHER" id="PTHR30218:SF0">
    <property type="entry name" value="POLYPHOSPHATE KINASE"/>
    <property type="match status" value="1"/>
</dbReference>
<dbReference type="Pfam" id="PF02503">
    <property type="entry name" value="PP_kinase"/>
    <property type="match status" value="1"/>
</dbReference>
<dbReference type="Pfam" id="PF13090">
    <property type="entry name" value="PP_kinase_C"/>
    <property type="match status" value="1"/>
</dbReference>
<dbReference type="Pfam" id="PF17941">
    <property type="entry name" value="PP_kinase_C_1"/>
    <property type="match status" value="1"/>
</dbReference>
<dbReference type="Pfam" id="PF13089">
    <property type="entry name" value="PP_kinase_N"/>
    <property type="match status" value="1"/>
</dbReference>
<dbReference type="PIRSF" id="PIRSF015589">
    <property type="entry name" value="PP_kinase"/>
    <property type="match status" value="1"/>
</dbReference>
<dbReference type="SUPFAM" id="SSF56024">
    <property type="entry name" value="Phospholipase D/nuclease"/>
    <property type="match status" value="2"/>
</dbReference>
<dbReference type="SUPFAM" id="SSF143724">
    <property type="entry name" value="PHP14-like"/>
    <property type="match status" value="1"/>
</dbReference>
<dbReference type="SUPFAM" id="SSF140356">
    <property type="entry name" value="PPK N-terminal domain-like"/>
    <property type="match status" value="1"/>
</dbReference>
<proteinExistence type="inferred from homology"/>
<accession>A5EID1</accession>
<comment type="function">
    <text evidence="1">Catalyzes the reversible transfer of the terminal phosphate of ATP to form a long-chain polyphosphate (polyP).</text>
</comment>
<comment type="catalytic activity">
    <reaction evidence="1">
        <text>[phosphate](n) + ATP = [phosphate](n+1) + ADP</text>
        <dbReference type="Rhea" id="RHEA:19573"/>
        <dbReference type="Rhea" id="RHEA-COMP:9859"/>
        <dbReference type="Rhea" id="RHEA-COMP:14280"/>
        <dbReference type="ChEBI" id="CHEBI:16838"/>
        <dbReference type="ChEBI" id="CHEBI:30616"/>
        <dbReference type="ChEBI" id="CHEBI:456216"/>
        <dbReference type="EC" id="2.7.4.1"/>
    </reaction>
</comment>
<comment type="cofactor">
    <cofactor evidence="1">
        <name>Mg(2+)</name>
        <dbReference type="ChEBI" id="CHEBI:18420"/>
    </cofactor>
</comment>
<comment type="PTM">
    <text evidence="1">An intermediate of this reaction is the autophosphorylated ppk in which a phosphate is covalently linked to a histidine residue through a N-P bond.</text>
</comment>
<comment type="similarity">
    <text evidence="1">Belongs to the polyphosphate kinase 1 (PPK1) family.</text>
</comment>
<name>PPK1_BRASB</name>